<reference key="1">
    <citation type="journal article" date="2004" name="Proc. Natl. Acad. Sci. U.S.A.">
        <title>The endogenous retroviral locus ERVWE1 is a bona fide gene involved in hominoid placental physiology.</title>
        <authorList>
            <person name="Mallet F."/>
            <person name="Bouton O."/>
            <person name="Prudhomme S."/>
            <person name="Cheynet V."/>
            <person name="Oriol G."/>
            <person name="Bonnaud B."/>
            <person name="Lucotte G."/>
            <person name="Duret L."/>
            <person name="Mandrand B."/>
        </authorList>
    </citation>
    <scope>NUCLEOTIDE SEQUENCE [GENOMIC DNA]</scope>
</reference>
<reference key="2">
    <citation type="journal article" date="2006" name="J. Hered.">
        <title>The gene of retroviral origin Syncytin 1 is specific to hominoids and is inactive in Old World monkeys.</title>
        <authorList>
            <person name="Caceres M."/>
            <person name="Thomas J.W."/>
        </authorList>
    </citation>
    <scope>NUCLEOTIDE SEQUENCE [GENOMIC DNA]</scope>
</reference>
<organism>
    <name type="scientific">Gorilla gorilla gorilla</name>
    <name type="common">Western lowland gorilla</name>
    <dbReference type="NCBI Taxonomy" id="9595"/>
    <lineage>
        <taxon>Eukaryota</taxon>
        <taxon>Metazoa</taxon>
        <taxon>Chordata</taxon>
        <taxon>Craniata</taxon>
        <taxon>Vertebrata</taxon>
        <taxon>Euteleostomi</taxon>
        <taxon>Mammalia</taxon>
        <taxon>Eutheria</taxon>
        <taxon>Euarchontoglires</taxon>
        <taxon>Primates</taxon>
        <taxon>Haplorrhini</taxon>
        <taxon>Catarrhini</taxon>
        <taxon>Hominidae</taxon>
        <taxon>Gorilla</taxon>
    </lineage>
</organism>
<feature type="signal peptide" evidence="5">
    <location>
        <begin position="1"/>
        <end position="20"/>
    </location>
</feature>
<feature type="chain" id="PRO_0000008482" description="Syncytin-1">
    <location>
        <begin position="21"/>
        <end position="538"/>
    </location>
</feature>
<feature type="chain" id="PRO_0000008483" description="Surface protein" evidence="1">
    <location>
        <begin position="21"/>
        <end position="317"/>
    </location>
</feature>
<feature type="chain" id="PRO_0000008484" description="Transmembrane protein" evidence="1">
    <location>
        <begin position="318"/>
        <end position="538"/>
    </location>
</feature>
<feature type="topological domain" description="Extracellular" evidence="5">
    <location>
        <begin position="21"/>
        <end position="443"/>
    </location>
</feature>
<feature type="transmembrane region" description="Helical" evidence="5">
    <location>
        <begin position="444"/>
        <end position="464"/>
    </location>
</feature>
<feature type="topological domain" description="Cytoplasmic" evidence="5">
    <location>
        <begin position="465"/>
        <end position="538"/>
    </location>
</feature>
<feature type="region of interest" description="Fusion peptide" evidence="5">
    <location>
        <begin position="320"/>
        <end position="340"/>
    </location>
</feature>
<feature type="region of interest" description="Immunosuppression" evidence="1">
    <location>
        <begin position="380"/>
        <end position="396"/>
    </location>
</feature>
<feature type="region of interest" description="Essential for the fusiogenic function" evidence="1">
    <location>
        <begin position="465"/>
        <end position="484"/>
    </location>
</feature>
<feature type="region of interest" description="Disordered" evidence="6">
    <location>
        <begin position="496"/>
        <end position="538"/>
    </location>
</feature>
<feature type="short sequence motif" description="CXXC" evidence="7">
    <location>
        <begin position="186"/>
        <end position="189"/>
    </location>
</feature>
<feature type="short sequence motif" description="CX6CC" evidence="7">
    <location>
        <begin position="397"/>
        <end position="405"/>
    </location>
</feature>
<feature type="site" description="Cleavage" evidence="4">
    <location>
        <begin position="317"/>
        <end position="318"/>
    </location>
</feature>
<feature type="glycosylation site" description="N-linked (GlcNAc...) asparagine" evidence="5">
    <location>
        <position position="169"/>
    </location>
</feature>
<feature type="glycosylation site" description="N-linked (GlcNAc...) asparagine" evidence="5">
    <location>
        <position position="208"/>
    </location>
</feature>
<feature type="glycosylation site" description="N-linked (GlcNAc...) asparagine" evidence="5">
    <location>
        <position position="214"/>
    </location>
</feature>
<feature type="glycosylation site" description="N-linked (GlcNAc...) asparagine" evidence="5">
    <location>
        <position position="234"/>
    </location>
</feature>
<feature type="glycosylation site" description="N-linked (GlcNAc...) asparagine" evidence="5">
    <location>
        <position position="281"/>
    </location>
</feature>
<feature type="glycosylation site" description="N-linked (GlcNAc...) asparagine" evidence="5">
    <location>
        <position position="409"/>
    </location>
</feature>
<feature type="disulfide bond" description="Interchain (between SU and TM chains, or C-189 with C-405); in linked form" evidence="4">
    <location>
        <begin position="186"/>
        <end position="405"/>
    </location>
</feature>
<feature type="disulfide bond" evidence="2">
    <location>
        <begin position="186"/>
        <end position="189"/>
    </location>
</feature>
<feature type="disulfide bond" evidence="3">
    <location>
        <begin position="397"/>
        <end position="404"/>
    </location>
</feature>
<sequence>MALPYHILLFTVLLPSFTLTAPPPCRCMTSSSPYQEFLWRMRRPGNIDAPSHRSFSKGTPTFTAHTHMPRNCYNSATLCMHANTHYWTGKMINPSCPGGLGVTVCWTYFTHTGMSDGGGVQDQAREKHVKEVISQLTRVHSTSSPYKGLDLSKLHETLRTHTRLVSLFNTTLTGLHEVSAQNPTNCWICLPLDFRPYVSIPVPEEWNNFSTEINTTSVLVGPLVSNLEITHTSNLTCVKFSNTIDTTNSQCIRWVTPPTQIVCLPSGIFFVCGTSAYRCLNGSSESMCFLSFLVPPMTIYTEQDLYNYVVSKPRNKRVPILPFVIGAGVLGALGTGIGGITTSTQFYYKLSQELNGDMERVADSLVTLQDQLNSLAAVVLQNRRALDLLTAERGGTCLFLGEECCYYVNQSGIVTEKVKEIRDRIQRRAEELRNTGPWGLLSQWMPWILPFLGPLAAIILLLLFGPCIFNLLVNFVSSRIEAVKLQMEPKMQSKTKIYRRPLDRPASPRSDVNDIKCTPPEEISTAQPLLRPNSAGSS</sequence>
<name>SYCY1_GORGO</name>
<proteinExistence type="inferred from homology"/>
<gene>
    <name type="primary">ERVW-1</name>
    <name type="synonym">ERVWE1</name>
</gene>
<accession>P61561</accession>
<accession>Q2XSV0</accession>
<evidence type="ECO:0000250" key="1"/>
<evidence type="ECO:0000250" key="2">
    <source>
        <dbReference type="UniProtKB" id="P23064"/>
    </source>
</evidence>
<evidence type="ECO:0000250" key="3">
    <source>
        <dbReference type="UniProtKB" id="P60508"/>
    </source>
</evidence>
<evidence type="ECO:0000250" key="4">
    <source>
        <dbReference type="UniProtKB" id="Q9UQF0"/>
    </source>
</evidence>
<evidence type="ECO:0000255" key="5"/>
<evidence type="ECO:0000256" key="6">
    <source>
        <dbReference type="SAM" id="MobiDB-lite"/>
    </source>
</evidence>
<evidence type="ECO:0000305" key="7"/>
<dbReference type="EMBL" id="AY101588">
    <property type="protein sequence ID" value="AAM68167.1"/>
    <property type="molecule type" value="Genomic_DNA"/>
</dbReference>
<dbReference type="EMBL" id="AY101589">
    <property type="protein sequence ID" value="AAM68168.1"/>
    <property type="molecule type" value="Genomic_DNA"/>
</dbReference>
<dbReference type="EMBL" id="DQ256474">
    <property type="protein sequence ID" value="ABB73024.1"/>
    <property type="molecule type" value="Genomic_DNA"/>
</dbReference>
<dbReference type="RefSeq" id="NP_001291470.1">
    <property type="nucleotide sequence ID" value="NM_001304541.1"/>
</dbReference>
<dbReference type="SMR" id="P61561"/>
<dbReference type="FunCoup" id="P61561">
    <property type="interactions" value="5"/>
</dbReference>
<dbReference type="GlyCosmos" id="P61561">
    <property type="glycosylation" value="6 sites, No reported glycans"/>
</dbReference>
<dbReference type="GeneID" id="105221760"/>
<dbReference type="KEGG" id="ggo:105221760"/>
<dbReference type="CTD" id="30816"/>
<dbReference type="InParanoid" id="P61561"/>
<dbReference type="OrthoDB" id="6409at9604"/>
<dbReference type="Proteomes" id="UP000001519">
    <property type="component" value="Unplaced"/>
</dbReference>
<dbReference type="GO" id="GO:0005886">
    <property type="term" value="C:plasma membrane"/>
    <property type="evidence" value="ECO:0007669"/>
    <property type="project" value="UniProtKB-SubCell"/>
</dbReference>
<dbReference type="GO" id="GO:0006949">
    <property type="term" value="P:syncytium formation"/>
    <property type="evidence" value="ECO:0000250"/>
    <property type="project" value="UniProtKB"/>
</dbReference>
<dbReference type="CDD" id="cd09851">
    <property type="entry name" value="HTLV-1-like_HR1-HR2"/>
    <property type="match status" value="1"/>
</dbReference>
<dbReference type="FunFam" id="1.10.287.210:FF:000002">
    <property type="entry name" value="Syncytin-2"/>
    <property type="match status" value="1"/>
</dbReference>
<dbReference type="Gene3D" id="1.10.287.210">
    <property type="match status" value="1"/>
</dbReference>
<dbReference type="InterPro" id="IPR018154">
    <property type="entry name" value="TLV/ENV_coat_polyprotein"/>
</dbReference>
<dbReference type="PANTHER" id="PTHR10424:SF48">
    <property type="entry name" value="SYNCYTIN-1"/>
    <property type="match status" value="1"/>
</dbReference>
<dbReference type="PANTHER" id="PTHR10424">
    <property type="entry name" value="VIRAL ENVELOPE PROTEIN"/>
    <property type="match status" value="1"/>
</dbReference>
<dbReference type="Pfam" id="PF00429">
    <property type="entry name" value="TLV_coat"/>
    <property type="match status" value="1"/>
</dbReference>
<dbReference type="SUPFAM" id="SSF58069">
    <property type="entry name" value="Virus ectodomain"/>
    <property type="match status" value="1"/>
</dbReference>
<comment type="function">
    <text evidence="1">This endogenous retroviral envelope protein has retained its original fusogenic properties and participates in trophoblast fusion and the formation of a syncytium during placenta morphogenesis. May recognize and induce fusion through binding of SLC1A4 and SLC1A5 (By similarity).</text>
</comment>
<comment type="function">
    <text evidence="1">Endogenous envelope proteins may have kept, lost or modified their original function during evolution. Retroviral envelope proteins mediate receptor recognition and membrane fusion during early infection. The surface protein (SU) mediates receptor recognition, while the transmembrane protein (TM) acts as a class I viral fusion protein. The protein may have at least 3 conformational states: pre-fusion native state, pre-hairpin intermediate state, and post-fusion hairpin state. During viral and target cell membrane fusion, the coiled coil regions (heptad repeats) assume a trimer-of-hairpins structure, positioning the fusion peptide in close proximity to the C-terminal region of the ectodomain. The formation of this structure appears to drive apposition and subsequent fusion of membranes (By similarity).</text>
</comment>
<comment type="subunit">
    <text evidence="1">The mature envelope protein (Env) consists of a trimer of SU-TM heterodimers attached probably by a labile interchain disulfide bond. Interacts with the C-type lectin CD209/DC-SIGN (By similarity).</text>
</comment>
<comment type="subcellular location">
    <molecule>Surface protein</molecule>
    <subcellularLocation>
        <location evidence="7">Cell membrane</location>
        <topology evidence="7">Peripheral membrane protein</topology>
    </subcellularLocation>
    <text evidence="4">The surface protein is not anchored to the membrane, but localizes to the extracellular surface through its binding to TM.</text>
</comment>
<comment type="subcellular location">
    <molecule>Transmembrane protein</molecule>
    <subcellularLocation>
        <location evidence="7">Cell membrane</location>
        <topology evidence="5">Single-pass type I membrane protein</topology>
    </subcellularLocation>
</comment>
<comment type="subcellular location">
    <molecule>Syncytin-1</molecule>
    <subcellularLocation>
        <location evidence="1">Virion</location>
    </subcellularLocation>
</comment>
<comment type="domain">
    <text evidence="1">The cytoplasmic region is essential for the fusiogenic function.</text>
</comment>
<comment type="domain">
    <text evidence="1">The 17 amino acids long immunosuppressive region is present in many retroviral envelope proteins. Synthetic peptides derived from this relatively conserved sequence inhibit immune function in vitro and in vivo (By similarity).</text>
</comment>
<comment type="PTM">
    <text evidence="1">Specific enzymatic cleavages in vivo yield mature proteins. Envelope glycoproteins are synthesized as an inactive precursor that is heavily N-glycosylated and processed likely by furin in the Golgi to yield the mature SU and TM proteins. The cleavage site between SU and TM requires the minimal sequence [KR]-X-[KR]-R (By similarity).</text>
</comment>
<comment type="PTM">
    <text evidence="1">The CXXC motif is highly conserved across a broad range of retroviral envelope proteins. It is thought to participate in the formation of a labile disulfide bond possibly with the CX6CC motif present in the transmembrane protein (By similarity).</text>
</comment>
<comment type="miscellaneous">
    <text>Ortholog of the human HERV-W_7q21.2 envelope protein.</text>
</comment>
<comment type="miscellaneous">
    <text>The genome contains a high percentage of proviral-like elements, also called endogenous retroviruses (ERVs) that are the genomic traces of ancient infections of the germline by exogenous retroviruses. Although most of these elements are defective, some have conserved a functional envelope (env) gene, most probably diverted by the host for its benefit.</text>
</comment>
<comment type="similarity">
    <text evidence="7">Belongs to the gamma type-C retroviral envelope protein family. HERV class-I W env subfamily.</text>
</comment>
<protein>
    <recommendedName>
        <fullName>Syncytin-1</fullName>
    </recommendedName>
    <alternativeName>
        <fullName>ERV-W1 provirus ancestral Env polyprotein</fullName>
    </alternativeName>
    <alternativeName>
        <fullName>ERVWE1 envelope protein</fullName>
    </alternativeName>
    <alternativeName>
        <fullName>Endogenous retrovirus group W member 1</fullName>
    </alternativeName>
    <alternativeName>
        <fullName>Envelope polyprotein</fullName>
    </alternativeName>
    <alternativeName>
        <fullName>Syncytin</fullName>
    </alternativeName>
    <component>
        <recommendedName>
            <fullName>Surface protein</fullName>
            <shortName>SU</shortName>
        </recommendedName>
    </component>
    <component>
        <recommendedName>
            <fullName>Transmembrane protein</fullName>
            <shortName>TM</shortName>
        </recommendedName>
    </component>
</protein>
<keyword id="KW-1003">Cell membrane</keyword>
<keyword id="KW-0165">Cleavage on pair of basic residues</keyword>
<keyword id="KW-1015">Disulfide bond</keyword>
<keyword id="KW-0895">ERV</keyword>
<keyword id="KW-0325">Glycoprotein</keyword>
<keyword id="KW-0472">Membrane</keyword>
<keyword id="KW-1185">Reference proteome</keyword>
<keyword id="KW-0732">Signal</keyword>
<keyword id="KW-0812">Transmembrane</keyword>
<keyword id="KW-1133">Transmembrane helix</keyword>
<keyword id="KW-0814">Transposable element</keyword>
<keyword id="KW-0261">Viral envelope protein</keyword>
<keyword id="KW-0946">Virion</keyword>